<name>UL14_HCMVA</name>
<comment type="sequence caution" evidence="3">
    <conflict type="erroneous initiation">
        <sequence resource="EMBL-CDS" id="CAA35447"/>
    </conflict>
</comment>
<dbReference type="EMBL" id="X17403">
    <property type="protein sequence ID" value="CAA35447.1"/>
    <property type="status" value="ALT_INIT"/>
    <property type="molecule type" value="Genomic_DNA"/>
</dbReference>
<dbReference type="EMBL" id="BK000394">
    <property type="protein sequence ID" value="DAA00118.1"/>
    <property type="molecule type" value="Genomic_DNA"/>
</dbReference>
<dbReference type="PIR" id="S09777">
    <property type="entry name" value="S09777"/>
</dbReference>
<dbReference type="SMR" id="P16756"/>
<dbReference type="GlyCosmos" id="P16756">
    <property type="glycosylation" value="2 sites, No reported glycans"/>
</dbReference>
<dbReference type="Proteomes" id="UP000008991">
    <property type="component" value="Segment"/>
</dbReference>
<dbReference type="Proteomes" id="UP000008992">
    <property type="component" value="Segment"/>
</dbReference>
<dbReference type="Gene3D" id="2.60.40.3790">
    <property type="match status" value="1"/>
</dbReference>
<dbReference type="InterPro" id="IPR031918">
    <property type="entry name" value="UL141"/>
</dbReference>
<dbReference type="InterPro" id="IPR038504">
    <property type="entry name" value="UL141-like_sf"/>
</dbReference>
<dbReference type="Pfam" id="PF16758">
    <property type="entry name" value="UL141"/>
    <property type="match status" value="1"/>
</dbReference>
<evidence type="ECO:0000255" key="1"/>
<evidence type="ECO:0000256" key="2">
    <source>
        <dbReference type="SAM" id="MobiDB-lite"/>
    </source>
</evidence>
<evidence type="ECO:0000305" key="3"/>
<organism>
    <name type="scientific">Human cytomegalovirus (strain AD169)</name>
    <name type="common">HHV-5</name>
    <name type="synonym">Human herpesvirus 5</name>
    <dbReference type="NCBI Taxonomy" id="10360"/>
    <lineage>
        <taxon>Viruses</taxon>
        <taxon>Duplodnaviria</taxon>
        <taxon>Heunggongvirae</taxon>
        <taxon>Peploviricota</taxon>
        <taxon>Herviviricetes</taxon>
        <taxon>Herpesvirales</taxon>
        <taxon>Orthoherpesviridae</taxon>
        <taxon>Betaherpesvirinae</taxon>
        <taxon>Cytomegalovirus</taxon>
        <taxon>Cytomegalovirus humanbeta5</taxon>
        <taxon>Human cytomegalovirus</taxon>
    </lineage>
</organism>
<feature type="signal peptide" evidence="1">
    <location>
        <begin position="1"/>
        <end position="23"/>
    </location>
</feature>
<feature type="chain" id="PRO_0000037450" description="Uncharacterized protein UL14">
    <location>
        <begin position="24"/>
        <end position="327"/>
    </location>
</feature>
<feature type="region of interest" description="Disordered" evidence="2">
    <location>
        <begin position="298"/>
        <end position="327"/>
    </location>
</feature>
<feature type="compositionally biased region" description="Low complexity" evidence="2">
    <location>
        <begin position="305"/>
        <end position="319"/>
    </location>
</feature>
<feature type="glycosylation site" description="N-linked (GlcNAc...) asparagine; by host" evidence="1">
    <location>
        <position position="144"/>
    </location>
</feature>
<feature type="glycosylation site" description="N-linked (GlcNAc...) asparagine; by host" evidence="1">
    <location>
        <position position="239"/>
    </location>
</feature>
<organismHost>
    <name type="scientific">Homo sapiens</name>
    <name type="common">Human</name>
    <dbReference type="NCBI Taxonomy" id="9606"/>
</organismHost>
<proteinExistence type="inferred from homology"/>
<gene>
    <name type="primary">UL14</name>
</gene>
<protein>
    <recommendedName>
        <fullName>Uncharacterized protein UL14</fullName>
    </recommendedName>
</protein>
<keyword id="KW-0325">Glycoprotein</keyword>
<keyword id="KW-1185">Reference proteome</keyword>
<keyword id="KW-0732">Signal</keyword>
<accession>P16756</accession>
<accession>Q7M6R8</accession>
<sequence>MGGGRLPPLWLPLLIAWSEWGNCCLDAPPVVRSPCLQPVRDRNRERNPGSPQLLPYGDRLEVACIFPAHDWPEVSIRVHLCYWPEIVRSLVVDARSGQVLHNDASCYIAGGRWRFEDGGAAQRLSLSFRLITETAGTYTCVLGNETHSLATETTALVADVHDLRHSDRSCDLAFGSRSQTRYLWTPDPSRLRSINCGWEGERHRVVHYIPGTSGLLPSCEEDERELCVPFISQSIADNNCSRRHRVDGARRRYHLRRDYWLTDPKIGLLAAGSVALTSLCHLLCYWCSESYRRLNTEEESEAAEETAAGEASAVAAAAVSEEEQRRE</sequence>
<reference key="1">
    <citation type="journal article" date="1990" name="Curr. Top. Microbiol. Immunol.">
        <title>Analysis of the protein-coding content of the sequence of human cytomegalovirus strain AD169.</title>
        <authorList>
            <person name="Chee M.S."/>
            <person name="Bankier A.T."/>
            <person name="Beck S."/>
            <person name="Bohni R."/>
            <person name="Brown C.M."/>
            <person name="Cerny R."/>
            <person name="Horsnell T."/>
            <person name="Hutchison C.A. III"/>
            <person name="Kouzarides T."/>
            <person name="Martignetti J.A."/>
            <person name="Preddie E."/>
            <person name="Satchwell S.C."/>
            <person name="Tomlinson P."/>
            <person name="Weston K.M."/>
            <person name="Barrell B.G."/>
        </authorList>
    </citation>
    <scope>NUCLEOTIDE SEQUENCE [LARGE SCALE GENOMIC DNA]</scope>
</reference>
<reference key="2">
    <citation type="journal article" date="2003" name="J. Gen. Virol.">
        <title>The human cytomegalovirus genome revisited: comparison with the chimpanzee cytomegalovirus genome.</title>
        <authorList>
            <person name="Davison A.J."/>
            <person name="Dolan A."/>
            <person name="Akter P."/>
            <person name="Addison C."/>
            <person name="Dargan D.J."/>
            <person name="Alcendor D.J."/>
            <person name="McGeoch D.J."/>
            <person name="Hayward G.S."/>
        </authorList>
    </citation>
    <scope>GENOME REANNOTATION</scope>
</reference>
<reference key="3">
    <citation type="journal article" date="2003" name="J. Gen. Virol.">
        <authorList>
            <person name="Davison A.J."/>
            <person name="Dolan A."/>
            <person name="Akter P."/>
            <person name="Addison C."/>
            <person name="Dargan D.J."/>
            <person name="Alcendor D.J."/>
            <person name="McGeoch D.J."/>
            <person name="Hayward G.S."/>
        </authorList>
    </citation>
    <scope>ERRATUM OF PUBMED:12533697</scope>
</reference>